<name>AGRA_STAES</name>
<protein>
    <recommendedName>
        <fullName>Accessory gene regulator protein A</fullName>
    </recommendedName>
</protein>
<organism>
    <name type="scientific">Staphylococcus epidermidis (strain ATCC 12228 / FDA PCI 1200)</name>
    <dbReference type="NCBI Taxonomy" id="176280"/>
    <lineage>
        <taxon>Bacteria</taxon>
        <taxon>Bacillati</taxon>
        <taxon>Bacillota</taxon>
        <taxon>Bacilli</taxon>
        <taxon>Bacillales</taxon>
        <taxon>Staphylococcaceae</taxon>
        <taxon>Staphylococcus</taxon>
    </lineage>
</organism>
<dbReference type="EMBL" id="AE015929">
    <property type="protein sequence ID" value="AAO05237.1"/>
    <property type="molecule type" value="Genomic_DNA"/>
</dbReference>
<dbReference type="RefSeq" id="NP_765193.1">
    <property type="nucleotide sequence ID" value="NC_004461.1"/>
</dbReference>
<dbReference type="RefSeq" id="WP_001829999.1">
    <property type="nucleotide sequence ID" value="NZ_WBME01000022.1"/>
</dbReference>
<dbReference type="SMR" id="Q8CNM5"/>
<dbReference type="KEGG" id="sep:SE_1638"/>
<dbReference type="PATRIC" id="fig|176280.10.peg.1603"/>
<dbReference type="eggNOG" id="COG3279">
    <property type="taxonomic scope" value="Bacteria"/>
</dbReference>
<dbReference type="HOGENOM" id="CLU_000445_14_6_9"/>
<dbReference type="OrthoDB" id="9809318at2"/>
<dbReference type="Proteomes" id="UP000001411">
    <property type="component" value="Chromosome"/>
</dbReference>
<dbReference type="GO" id="GO:0005737">
    <property type="term" value="C:cytoplasm"/>
    <property type="evidence" value="ECO:0007669"/>
    <property type="project" value="UniProtKB-SubCell"/>
</dbReference>
<dbReference type="GO" id="GO:0003677">
    <property type="term" value="F:DNA binding"/>
    <property type="evidence" value="ECO:0007669"/>
    <property type="project" value="UniProtKB-KW"/>
</dbReference>
<dbReference type="GO" id="GO:0000156">
    <property type="term" value="F:phosphorelay response regulator activity"/>
    <property type="evidence" value="ECO:0007669"/>
    <property type="project" value="InterPro"/>
</dbReference>
<dbReference type="CDD" id="cd17533">
    <property type="entry name" value="REC_LytTR_AgrA-like"/>
    <property type="match status" value="1"/>
</dbReference>
<dbReference type="FunFam" id="2.40.50.1020:FF:000005">
    <property type="entry name" value="Accessory gene regulator A"/>
    <property type="match status" value="1"/>
</dbReference>
<dbReference type="Gene3D" id="3.40.50.2300">
    <property type="match status" value="1"/>
</dbReference>
<dbReference type="Gene3D" id="2.40.50.1020">
    <property type="entry name" value="LytTr DNA-binding domain"/>
    <property type="match status" value="1"/>
</dbReference>
<dbReference type="InterPro" id="IPR011006">
    <property type="entry name" value="CheY-like_superfamily"/>
</dbReference>
<dbReference type="InterPro" id="IPR046947">
    <property type="entry name" value="LytR-like"/>
</dbReference>
<dbReference type="InterPro" id="IPR007492">
    <property type="entry name" value="LytTR_DNA-bd_dom"/>
</dbReference>
<dbReference type="InterPro" id="IPR001789">
    <property type="entry name" value="Sig_transdc_resp-reg_receiver"/>
</dbReference>
<dbReference type="NCBIfam" id="NF046049">
    <property type="entry name" value="quorum_RR_AgrA"/>
    <property type="match status" value="1"/>
</dbReference>
<dbReference type="PANTHER" id="PTHR37299:SF3">
    <property type="entry name" value="STAGE 0 SPORULATION PROTEIN A HOMOLOG"/>
    <property type="match status" value="1"/>
</dbReference>
<dbReference type="PANTHER" id="PTHR37299">
    <property type="entry name" value="TRANSCRIPTIONAL REGULATOR-RELATED"/>
    <property type="match status" value="1"/>
</dbReference>
<dbReference type="Pfam" id="PF04397">
    <property type="entry name" value="LytTR"/>
    <property type="match status" value="1"/>
</dbReference>
<dbReference type="Pfam" id="PF00072">
    <property type="entry name" value="Response_reg"/>
    <property type="match status" value="1"/>
</dbReference>
<dbReference type="SMART" id="SM00850">
    <property type="entry name" value="LytTR"/>
    <property type="match status" value="1"/>
</dbReference>
<dbReference type="SMART" id="SM00448">
    <property type="entry name" value="REC"/>
    <property type="match status" value="1"/>
</dbReference>
<dbReference type="SUPFAM" id="SSF52172">
    <property type="entry name" value="CheY-like"/>
    <property type="match status" value="1"/>
</dbReference>
<dbReference type="PROSITE" id="PS50930">
    <property type="entry name" value="HTH_LYTTR"/>
    <property type="match status" value="1"/>
</dbReference>
<dbReference type="PROSITE" id="PS50110">
    <property type="entry name" value="RESPONSE_REGULATORY"/>
    <property type="match status" value="1"/>
</dbReference>
<sequence>MKIFVCEDDQRQREHMVSIIKNYIMIEEKPMELALATNDPYEVLEQSKELNDIGCYFLDIQLEADMNGIKLASEIRKHDPVGNIIFVTSHSELTYLTFVYKVAAMDFIFKDDPSELKMRIIDCLETAHTRLKLLSKESNVDTIELKRGSNSVYVQYDDIMFFESSTKSHRLIAHLDNRQIEFYGNLKELAQLDERFFRCHNSFVINRHNIESIDSKERIVYFKNGENCFASVRNVKKI</sequence>
<reference key="1">
    <citation type="journal article" date="2003" name="Mol. Microbiol.">
        <title>Genome-based analysis of virulence genes in a non-biofilm-forming Staphylococcus epidermidis strain (ATCC 12228).</title>
        <authorList>
            <person name="Zhang Y.-Q."/>
            <person name="Ren S.-X."/>
            <person name="Li H.-L."/>
            <person name="Wang Y.-X."/>
            <person name="Fu G."/>
            <person name="Yang J."/>
            <person name="Qin Z.-Q."/>
            <person name="Miao Y.-G."/>
            <person name="Wang W.-Y."/>
            <person name="Chen R.-S."/>
            <person name="Shen Y."/>
            <person name="Chen Z."/>
            <person name="Yuan Z.-H."/>
            <person name="Zhao G.-P."/>
            <person name="Qu D."/>
            <person name="Danchin A."/>
            <person name="Wen Y.-M."/>
        </authorList>
    </citation>
    <scope>NUCLEOTIDE SEQUENCE [LARGE SCALE GENOMIC DNA]</scope>
    <source>
        <strain>ATCC 12228 / FDA PCI 1200</strain>
    </source>
</reference>
<proteinExistence type="inferred from homology"/>
<evidence type="ECO:0000250" key="1"/>
<evidence type="ECO:0000255" key="2">
    <source>
        <dbReference type="PROSITE-ProRule" id="PRU00112"/>
    </source>
</evidence>
<evidence type="ECO:0000255" key="3">
    <source>
        <dbReference type="PROSITE-ProRule" id="PRU00169"/>
    </source>
</evidence>
<gene>
    <name type="primary">agrA</name>
    <name type="ordered locus">SE_1638</name>
</gene>
<accession>Q8CNM5</accession>
<comment type="function">
    <text evidence="1">Required for high-level post-exponential phase expression of a series of secreted proteins.</text>
</comment>
<comment type="subcellular location">
    <subcellularLocation>
        <location evidence="1">Cytoplasm</location>
    </subcellularLocation>
</comment>
<feature type="chain" id="PRO_0000081002" description="Accessory gene regulator protein A">
    <location>
        <begin position="1"/>
        <end position="238"/>
    </location>
</feature>
<feature type="domain" description="Response regulatory" evidence="3">
    <location>
        <begin position="2"/>
        <end position="125"/>
    </location>
</feature>
<feature type="domain" description="HTH LytTR-type" evidence="2">
    <location>
        <begin position="143"/>
        <end position="238"/>
    </location>
</feature>
<feature type="modified residue" description="4-aspartylphosphate" evidence="3">
    <location>
        <position position="59"/>
    </location>
</feature>
<keyword id="KW-0010">Activator</keyword>
<keyword id="KW-0963">Cytoplasm</keyword>
<keyword id="KW-0238">DNA-binding</keyword>
<keyword id="KW-0597">Phosphoprotein</keyword>
<keyword id="KW-0804">Transcription</keyword>
<keyword id="KW-0805">Transcription regulation</keyword>
<keyword id="KW-0902">Two-component regulatory system</keyword>